<accession>Q4R6K9</accession>
<accession>Q4R6B3</accession>
<evidence type="ECO:0000250" key="1">
    <source>
        <dbReference type="UniProtKB" id="P15690"/>
    </source>
</evidence>
<evidence type="ECO:0000250" key="2">
    <source>
        <dbReference type="UniProtKB" id="P28331"/>
    </source>
</evidence>
<evidence type="ECO:0000250" key="3">
    <source>
        <dbReference type="UniProtKB" id="Q56223"/>
    </source>
</evidence>
<evidence type="ECO:0000250" key="4">
    <source>
        <dbReference type="UniProtKB" id="Q91VD9"/>
    </source>
</evidence>
<evidence type="ECO:0000255" key="5">
    <source>
        <dbReference type="PROSITE-ProRule" id="PRU00465"/>
    </source>
</evidence>
<evidence type="ECO:0000255" key="6">
    <source>
        <dbReference type="PROSITE-ProRule" id="PRU01004"/>
    </source>
</evidence>
<evidence type="ECO:0000255" key="7">
    <source>
        <dbReference type="PROSITE-ProRule" id="PRU01184"/>
    </source>
</evidence>
<evidence type="ECO:0000305" key="8"/>
<reference key="1">
    <citation type="submission" date="2005-06" db="EMBL/GenBank/DDBJ databases">
        <title>DNA sequences of macaque genes expressed in brain or testis and its evolutionary implications.</title>
        <authorList>
            <consortium name="International consortium for macaque cDNA sequencing and analysis"/>
        </authorList>
    </citation>
    <scope>NUCLEOTIDE SEQUENCE [LARGE SCALE MRNA]</scope>
    <source>
        <tissue>Testis</tissue>
    </source>
</reference>
<sequence length="727" mass="79547">MLRIPVRKALVGLSKSPKGCVRTTATAASNLIEVFVDGQSVMVEPGTTVLQACEKVGMQIPRFCYHERLSVAGNCRMCLVEIEKAPKVVAACAMPVMKGWNILTNSEKSKKAREGVMEFLLANHPLDCPICDQGGECDLQDQSMMFGNDRSRFLEGKRAVEDKNIGPLVKTIMTRCIQCTRCIRFASEIAGVDDLGTTGRGNDMQVGTYIEKMFMSELSGNIIDICPVGALTSKPYAFTARPWETRKTESIDVMDAVGSNIVVSTRTGEVMRILPRMHEDINEEWISDKTRFAYDGLKRQRLTEPMIRNEKGLLTYTSWEDALSRVAGMLQSFQGKDVAAIAGGLVDAEALVALKDLLNRVDSDTLCTEEVFPTAGAGTDLRSNYLLNTTIAGVEEADVVLLVGTNPRFEVPLFNARIRKSWLHNDLKVALIGSPVDLTYRYDHLGDSPKILQDIASGSHPFSQVLKEAKKPMVVLGSSALQRNDGAAILAAVSSIAQKIRMTSGVTGDWKVMNILHRIASQVAALDLGYKPGVEAIRKNPPKVLFLLGADGGCITRQDLPKDCFIIYQGHHGDVGAPIADVILPGAAYTEKSATYVNTEGRAQQTKVAVTPPGLAREDWKIIRALSEIAGITLPYDTLDQVRNRLEEVSPNLVRYDDIEGANYFQQANELSKLVNQQLLADPLVPPQLTIKDFYMTDSISRASQTMAKCVKAVTEGAQAVEEPSIC</sequence>
<dbReference type="EC" id="7.1.1.2" evidence="2"/>
<dbReference type="EMBL" id="AB169174">
    <property type="protein sequence ID" value="BAE01266.1"/>
    <property type="molecule type" value="mRNA"/>
</dbReference>
<dbReference type="EMBL" id="AB169274">
    <property type="protein sequence ID" value="BAE01362.1"/>
    <property type="molecule type" value="mRNA"/>
</dbReference>
<dbReference type="RefSeq" id="NP_001270152.1">
    <property type="nucleotide sequence ID" value="NM_001283223.1"/>
</dbReference>
<dbReference type="SMR" id="Q4R6K9"/>
<dbReference type="STRING" id="9541.ENSMFAP00000043657"/>
<dbReference type="eggNOG" id="KOG2282">
    <property type="taxonomic scope" value="Eukaryota"/>
</dbReference>
<dbReference type="Proteomes" id="UP000233100">
    <property type="component" value="Unplaced"/>
</dbReference>
<dbReference type="GO" id="GO:0005743">
    <property type="term" value="C:mitochondrial inner membrane"/>
    <property type="evidence" value="ECO:0000250"/>
    <property type="project" value="UniProtKB"/>
</dbReference>
<dbReference type="GO" id="GO:0005758">
    <property type="term" value="C:mitochondrial intermembrane space"/>
    <property type="evidence" value="ECO:0000250"/>
    <property type="project" value="UniProtKB"/>
</dbReference>
<dbReference type="GO" id="GO:0005739">
    <property type="term" value="C:mitochondrion"/>
    <property type="evidence" value="ECO:0000250"/>
    <property type="project" value="UniProtKB"/>
</dbReference>
<dbReference type="GO" id="GO:0045271">
    <property type="term" value="C:respiratory chain complex I"/>
    <property type="evidence" value="ECO:0000250"/>
    <property type="project" value="UniProtKB"/>
</dbReference>
<dbReference type="GO" id="GO:0051537">
    <property type="term" value="F:2 iron, 2 sulfur cluster binding"/>
    <property type="evidence" value="ECO:0007669"/>
    <property type="project" value="UniProtKB-KW"/>
</dbReference>
<dbReference type="GO" id="GO:0051539">
    <property type="term" value="F:4 iron, 4 sulfur cluster binding"/>
    <property type="evidence" value="ECO:0007669"/>
    <property type="project" value="UniProtKB-KW"/>
</dbReference>
<dbReference type="GO" id="GO:0046872">
    <property type="term" value="F:metal ion binding"/>
    <property type="evidence" value="ECO:0007669"/>
    <property type="project" value="UniProtKB-KW"/>
</dbReference>
<dbReference type="GO" id="GO:0008137">
    <property type="term" value="F:NADH dehydrogenase (ubiquinone) activity"/>
    <property type="evidence" value="ECO:0000250"/>
    <property type="project" value="UniProtKB"/>
</dbReference>
<dbReference type="GO" id="GO:0006120">
    <property type="term" value="P:mitochondrial electron transport, NADH to ubiquinone"/>
    <property type="evidence" value="ECO:0000250"/>
    <property type="project" value="UniProtKB"/>
</dbReference>
<dbReference type="GO" id="GO:0032981">
    <property type="term" value="P:mitochondrial respiratory chain complex I assembly"/>
    <property type="evidence" value="ECO:0000250"/>
    <property type="project" value="UniProtKB"/>
</dbReference>
<dbReference type="CDD" id="cd00207">
    <property type="entry name" value="fer2"/>
    <property type="match status" value="1"/>
</dbReference>
<dbReference type="CDD" id="cd02773">
    <property type="entry name" value="MopB_Res-Cmplx1_Nad11"/>
    <property type="match status" value="1"/>
</dbReference>
<dbReference type="FunFam" id="3.10.20.740:FF:000001">
    <property type="entry name" value="NADH-quinone oxidoreductase subunit G"/>
    <property type="match status" value="1"/>
</dbReference>
<dbReference type="FunFam" id="3.30.200.210:FF:000002">
    <property type="entry name" value="NADH-ubiquinone oxidoreductase 75 kDa subunit"/>
    <property type="match status" value="1"/>
</dbReference>
<dbReference type="FunFam" id="3.30.70.20:FF:000002">
    <property type="entry name" value="NADH-ubiquinone oxidoreductase 75 kDa subunit"/>
    <property type="match status" value="1"/>
</dbReference>
<dbReference type="FunFam" id="3.40.50.740:FF:000002">
    <property type="entry name" value="NADH-ubiquinone oxidoreductase 75 kDa subunit, mitochondrial"/>
    <property type="match status" value="1"/>
</dbReference>
<dbReference type="Gene3D" id="3.10.20.740">
    <property type="match status" value="1"/>
</dbReference>
<dbReference type="Gene3D" id="3.30.200.210">
    <property type="match status" value="1"/>
</dbReference>
<dbReference type="Gene3D" id="3.30.70.20">
    <property type="match status" value="1"/>
</dbReference>
<dbReference type="Gene3D" id="3.40.50.740">
    <property type="match status" value="1"/>
</dbReference>
<dbReference type="InterPro" id="IPR036010">
    <property type="entry name" value="2Fe-2S_ferredoxin-like_sf"/>
</dbReference>
<dbReference type="InterPro" id="IPR001041">
    <property type="entry name" value="2Fe-2S_ferredoxin-type"/>
</dbReference>
<dbReference type="InterPro" id="IPR006656">
    <property type="entry name" value="Mopterin_OxRdtase"/>
</dbReference>
<dbReference type="InterPro" id="IPR006963">
    <property type="entry name" value="Mopterin_OxRdtase_4Fe-4S_dom"/>
</dbReference>
<dbReference type="InterPro" id="IPR000283">
    <property type="entry name" value="NADH_UbQ_OxRdtase_75kDa_su_CS"/>
</dbReference>
<dbReference type="InterPro" id="IPR054351">
    <property type="entry name" value="NADH_UbQ_OxRdtase_ferredoxin"/>
</dbReference>
<dbReference type="InterPro" id="IPR010228">
    <property type="entry name" value="NADH_UbQ_OxRdtase_Gsu"/>
</dbReference>
<dbReference type="InterPro" id="IPR019574">
    <property type="entry name" value="NADH_UbQ_OxRdtase_Gsu_4Fe4S-bd"/>
</dbReference>
<dbReference type="InterPro" id="IPR015405">
    <property type="entry name" value="NDUFS1-like_C"/>
</dbReference>
<dbReference type="InterPro" id="IPR050123">
    <property type="entry name" value="Prok_molybdopt-oxidoreductase"/>
</dbReference>
<dbReference type="NCBIfam" id="TIGR01973">
    <property type="entry name" value="NuoG"/>
    <property type="match status" value="1"/>
</dbReference>
<dbReference type="PANTHER" id="PTHR43105:SF13">
    <property type="entry name" value="NADH-UBIQUINONE OXIDOREDUCTASE 75 KDA SUBUNIT, MITOCHONDRIAL"/>
    <property type="match status" value="1"/>
</dbReference>
<dbReference type="PANTHER" id="PTHR43105">
    <property type="entry name" value="RESPIRATORY NITRATE REDUCTASE"/>
    <property type="match status" value="1"/>
</dbReference>
<dbReference type="Pfam" id="PF13510">
    <property type="entry name" value="Fer2_4"/>
    <property type="match status" value="1"/>
</dbReference>
<dbReference type="Pfam" id="PF22151">
    <property type="entry name" value="Fer4_NDSU1"/>
    <property type="match status" value="1"/>
</dbReference>
<dbReference type="Pfam" id="PF22117">
    <property type="entry name" value="Fer4_Nqo3"/>
    <property type="match status" value="1"/>
</dbReference>
<dbReference type="Pfam" id="PF00384">
    <property type="entry name" value="Molybdopterin"/>
    <property type="match status" value="1"/>
</dbReference>
<dbReference type="Pfam" id="PF10588">
    <property type="entry name" value="NADH-G_4Fe-4S_3"/>
    <property type="match status" value="1"/>
</dbReference>
<dbReference type="Pfam" id="PF09326">
    <property type="entry name" value="NADH_dhqG_C"/>
    <property type="match status" value="1"/>
</dbReference>
<dbReference type="SMART" id="SM00929">
    <property type="entry name" value="NADH-G_4Fe-4S_3"/>
    <property type="match status" value="1"/>
</dbReference>
<dbReference type="SUPFAM" id="SSF54292">
    <property type="entry name" value="2Fe-2S ferredoxin-like"/>
    <property type="match status" value="1"/>
</dbReference>
<dbReference type="SUPFAM" id="SSF54862">
    <property type="entry name" value="4Fe-4S ferredoxins"/>
    <property type="match status" value="1"/>
</dbReference>
<dbReference type="SUPFAM" id="SSF53706">
    <property type="entry name" value="Formate dehydrogenase/DMSO reductase, domains 1-3"/>
    <property type="match status" value="1"/>
</dbReference>
<dbReference type="PROSITE" id="PS51085">
    <property type="entry name" value="2FE2S_FER_2"/>
    <property type="match status" value="1"/>
</dbReference>
<dbReference type="PROSITE" id="PS51839">
    <property type="entry name" value="4FE4S_HC3"/>
    <property type="match status" value="1"/>
</dbReference>
<dbReference type="PROSITE" id="PS51669">
    <property type="entry name" value="4FE4S_MOW_BIS_MGD"/>
    <property type="match status" value="1"/>
</dbReference>
<dbReference type="PROSITE" id="PS00641">
    <property type="entry name" value="COMPLEX1_75K_1"/>
    <property type="match status" value="1"/>
</dbReference>
<dbReference type="PROSITE" id="PS00642">
    <property type="entry name" value="COMPLEX1_75K_2"/>
    <property type="match status" value="1"/>
</dbReference>
<dbReference type="PROSITE" id="PS00643">
    <property type="entry name" value="COMPLEX1_75K_3"/>
    <property type="match status" value="1"/>
</dbReference>
<name>NDUS1_MACFA</name>
<gene>
    <name type="primary">NDUFS1</name>
    <name type="ORF">QtsA-17780</name>
    <name type="ORF">QtsA-18546</name>
</gene>
<protein>
    <recommendedName>
        <fullName>NADH-ubiquinone oxidoreductase 75 kDa subunit, mitochondrial</fullName>
        <ecNumber evidence="2">7.1.1.2</ecNumber>
    </recommendedName>
    <alternativeName>
        <fullName>Complex I-75kD</fullName>
        <shortName>CI-75kD</shortName>
    </alternativeName>
</protein>
<feature type="transit peptide" description="Mitochondrion" evidence="1">
    <location>
        <begin position="1"/>
        <end position="23"/>
    </location>
</feature>
<feature type="chain" id="PRO_0000251854" description="NADH-ubiquinone oxidoreductase 75 kDa subunit, mitochondrial">
    <location>
        <begin position="24"/>
        <end position="727"/>
    </location>
</feature>
<feature type="domain" description="2Fe-2S ferredoxin-type" evidence="5">
    <location>
        <begin position="30"/>
        <end position="108"/>
    </location>
</feature>
<feature type="domain" description="4Fe-4S His(Cys)3-ligated-type" evidence="7">
    <location>
        <begin position="108"/>
        <end position="147"/>
    </location>
</feature>
<feature type="domain" description="4Fe-4S Mo/W bis-MGD-type" evidence="6">
    <location>
        <begin position="245"/>
        <end position="301"/>
    </location>
</feature>
<feature type="binding site" evidence="3">
    <location>
        <position position="64"/>
    </location>
    <ligand>
        <name>[2Fe-2S] cluster</name>
        <dbReference type="ChEBI" id="CHEBI:190135"/>
    </ligand>
</feature>
<feature type="binding site" evidence="3">
    <location>
        <position position="75"/>
    </location>
    <ligand>
        <name>[2Fe-2S] cluster</name>
        <dbReference type="ChEBI" id="CHEBI:190135"/>
    </ligand>
</feature>
<feature type="binding site" evidence="3">
    <location>
        <position position="78"/>
    </location>
    <ligand>
        <name>[2Fe-2S] cluster</name>
        <dbReference type="ChEBI" id="CHEBI:190135"/>
    </ligand>
</feature>
<feature type="binding site" evidence="3">
    <location>
        <position position="92"/>
    </location>
    <ligand>
        <name>[2Fe-2S] cluster</name>
        <dbReference type="ChEBI" id="CHEBI:190135"/>
    </ligand>
</feature>
<feature type="binding site" evidence="7">
    <location>
        <position position="124"/>
    </location>
    <ligand>
        <name>[4Fe-4S] cluster</name>
        <dbReference type="ChEBI" id="CHEBI:49883"/>
        <label>1</label>
    </ligand>
</feature>
<feature type="binding site" evidence="7">
    <location>
        <position position="128"/>
    </location>
    <ligand>
        <name>[4Fe-4S] cluster</name>
        <dbReference type="ChEBI" id="CHEBI:49883"/>
        <label>1</label>
    </ligand>
</feature>
<feature type="binding site" evidence="7">
    <location>
        <position position="131"/>
    </location>
    <ligand>
        <name>[4Fe-4S] cluster</name>
        <dbReference type="ChEBI" id="CHEBI:49883"/>
        <label>1</label>
    </ligand>
</feature>
<feature type="binding site" evidence="7">
    <location>
        <position position="137"/>
    </location>
    <ligand>
        <name>[4Fe-4S] cluster</name>
        <dbReference type="ChEBI" id="CHEBI:49883"/>
        <label>1</label>
    </ligand>
</feature>
<feature type="binding site" evidence="3">
    <location>
        <position position="176"/>
    </location>
    <ligand>
        <name>[4Fe-4S] cluster</name>
        <dbReference type="ChEBI" id="CHEBI:49883"/>
        <label>2</label>
    </ligand>
</feature>
<feature type="binding site" evidence="3">
    <location>
        <position position="179"/>
    </location>
    <ligand>
        <name>[4Fe-4S] cluster</name>
        <dbReference type="ChEBI" id="CHEBI:49883"/>
        <label>2</label>
    </ligand>
</feature>
<feature type="binding site" evidence="3">
    <location>
        <position position="182"/>
    </location>
    <ligand>
        <name>[4Fe-4S] cluster</name>
        <dbReference type="ChEBI" id="CHEBI:49883"/>
        <label>2</label>
    </ligand>
</feature>
<feature type="binding site" evidence="3">
    <location>
        <position position="226"/>
    </location>
    <ligand>
        <name>[4Fe-4S] cluster</name>
        <dbReference type="ChEBI" id="CHEBI:49883"/>
        <label>2</label>
    </ligand>
</feature>
<feature type="modified residue" description="N6-acetyllysine" evidence="4">
    <location>
        <position position="84"/>
    </location>
</feature>
<feature type="modified residue" description="N6-acetyllysine" evidence="4">
    <location>
        <position position="467"/>
    </location>
</feature>
<feature type="modified residue" description="N6-acetyllysine" evidence="4">
    <location>
        <position position="499"/>
    </location>
</feature>
<feature type="modified residue" description="N6-acetyllysine" evidence="4">
    <location>
        <position position="709"/>
    </location>
</feature>
<feature type="sequence conflict" description="In Ref. 1; BAE01362." evidence="8" ref="1">
    <original>G</original>
    <variation>S</variation>
    <location>
        <position position="335"/>
    </location>
</feature>
<feature type="sequence conflict" description="In Ref. 1; BAE01362." evidence="8" ref="1">
    <original>V</original>
    <variation>A</variation>
    <location>
        <position position="411"/>
    </location>
</feature>
<proteinExistence type="evidence at transcript level"/>
<keyword id="KW-0001">2Fe-2S</keyword>
<keyword id="KW-0004">4Fe-4S</keyword>
<keyword id="KW-0007">Acetylation</keyword>
<keyword id="KW-0249">Electron transport</keyword>
<keyword id="KW-0408">Iron</keyword>
<keyword id="KW-0411">Iron-sulfur</keyword>
<keyword id="KW-0472">Membrane</keyword>
<keyword id="KW-0479">Metal-binding</keyword>
<keyword id="KW-0496">Mitochondrion</keyword>
<keyword id="KW-0999">Mitochondrion inner membrane</keyword>
<keyword id="KW-0520">NAD</keyword>
<keyword id="KW-0560">Oxidoreductase</keyword>
<keyword id="KW-1185">Reference proteome</keyword>
<keyword id="KW-0679">Respiratory chain</keyword>
<keyword id="KW-0809">Transit peptide</keyword>
<keyword id="KW-1278">Translocase</keyword>
<keyword id="KW-0813">Transport</keyword>
<keyword id="KW-0830">Ubiquinone</keyword>
<organism>
    <name type="scientific">Macaca fascicularis</name>
    <name type="common">Crab-eating macaque</name>
    <name type="synonym">Cynomolgus monkey</name>
    <dbReference type="NCBI Taxonomy" id="9541"/>
    <lineage>
        <taxon>Eukaryota</taxon>
        <taxon>Metazoa</taxon>
        <taxon>Chordata</taxon>
        <taxon>Craniata</taxon>
        <taxon>Vertebrata</taxon>
        <taxon>Euteleostomi</taxon>
        <taxon>Mammalia</taxon>
        <taxon>Eutheria</taxon>
        <taxon>Euarchontoglires</taxon>
        <taxon>Primates</taxon>
        <taxon>Haplorrhini</taxon>
        <taxon>Catarrhini</taxon>
        <taxon>Cercopithecidae</taxon>
        <taxon>Cercopithecinae</taxon>
        <taxon>Macaca</taxon>
    </lineage>
</organism>
<comment type="function">
    <text evidence="2">Core subunit of the mitochondrial membrane respiratory chain NADH dehydrogenase (Complex I) which catalyzes electron transfer from NADH through the respiratory chain, using ubiquinone as an electron acceptor (By similarity). Essential for catalysing the entry and efficient transfer of electrons within complex I (By similarity). Plays a key role in the assembly and stability of complex I and participates in the association of complex I with ubiquinol-cytochrome reductase complex (Complex III) to form supercomplexes (By similarity).</text>
</comment>
<comment type="catalytic activity">
    <reaction evidence="2">
        <text>a ubiquinone + NADH + 5 H(+)(in) = a ubiquinol + NAD(+) + 4 H(+)(out)</text>
        <dbReference type="Rhea" id="RHEA:29091"/>
        <dbReference type="Rhea" id="RHEA-COMP:9565"/>
        <dbReference type="Rhea" id="RHEA-COMP:9566"/>
        <dbReference type="ChEBI" id="CHEBI:15378"/>
        <dbReference type="ChEBI" id="CHEBI:16389"/>
        <dbReference type="ChEBI" id="CHEBI:17976"/>
        <dbReference type="ChEBI" id="CHEBI:57540"/>
        <dbReference type="ChEBI" id="CHEBI:57945"/>
        <dbReference type="EC" id="7.1.1.2"/>
    </reaction>
</comment>
<comment type="cofactor">
    <cofactor evidence="3">
        <name>[2Fe-2S] cluster</name>
        <dbReference type="ChEBI" id="CHEBI:190135"/>
    </cofactor>
    <text evidence="3">Binds 1 [2Fe-2S] cluster per subunit.</text>
</comment>
<comment type="cofactor">
    <cofactor evidence="3">
        <name>[4Fe-4S] cluster</name>
        <dbReference type="ChEBI" id="CHEBI:49883"/>
    </cofactor>
    <text evidence="3">Binds 2 [4Fe-4S] clusters per subunit.</text>
</comment>
<comment type="subunit">
    <text evidence="1 2 4">Core subunit of respiratory chain NADH dehydrogenase (Complex I) which is composed of 45 different subunits (By similarity). This is the largest subunit of complex I and it is a component of the iron-sulfur (IP) fragment of the enzyme (By similarity). Complex I associates with ubiquinol-cytochrome reductase complex (Complex III) to form supercomplexes (By similarity). Interacts with MDM2 and AKAP1 (By similarity).</text>
</comment>
<comment type="subcellular location">
    <subcellularLocation>
        <location evidence="1">Mitochondrion inner membrane</location>
        <topology evidence="1">Peripheral membrane protein</topology>
        <orientation evidence="1">Matrix side</orientation>
    </subcellularLocation>
</comment>
<comment type="similarity">
    <text evidence="8">Belongs to the complex I 75 kDa subunit family.</text>
</comment>